<feature type="chain" id="PRO_0000425850" description="Cytochrome P450 703A2">
    <location>
        <begin position="1"/>
        <end position="510"/>
    </location>
</feature>
<feature type="transmembrane region" description="Helical" evidence="2">
    <location>
        <begin position="2"/>
        <end position="22"/>
    </location>
</feature>
<feature type="binding site" description="axial binding residue" evidence="1">
    <location>
        <position position="451"/>
    </location>
    <ligand>
        <name>heme</name>
        <dbReference type="ChEBI" id="CHEBI:30413"/>
    </ligand>
    <ligandPart>
        <name>Fe</name>
        <dbReference type="ChEBI" id="CHEBI:18248"/>
    </ligandPart>
</feature>
<gene>
    <name evidence="4" type="primary">CYP703A2</name>
    <name evidence="4" type="synonym">DEX2</name>
    <name type="ordered locus">At1g01280</name>
    <name type="ORF">F6F3.8</name>
</gene>
<keyword id="KW-0349">Heme</keyword>
<keyword id="KW-0408">Iron</keyword>
<keyword id="KW-0472">Membrane</keyword>
<keyword id="KW-0479">Metal-binding</keyword>
<keyword id="KW-0503">Monooxygenase</keyword>
<keyword id="KW-0560">Oxidoreductase</keyword>
<keyword id="KW-1185">Reference proteome</keyword>
<keyword id="KW-0812">Transmembrane</keyword>
<keyword id="KW-1133">Transmembrane helix</keyword>
<comment type="function">
    <text evidence="3">Involved in pollen wall development. Catalyzes the conversion of medium-chain saturated fatty acids to the corresponding monohydroxylated fatty acids, with a preferential hydroxylation of lauric acid at the C-7 position. In-chain hydroxylated fatty acids, together with omega-hydroxylated fatty acids, are key monomeric aliphatic building blocks for sporopollenin synthesis during exine formation.</text>
</comment>
<comment type="catalytic activity">
    <reaction evidence="3">
        <text>dodecanoate + reduced [NADPH--hemoprotein reductase] + O2 = 7-hydroxydodecanoate + oxidized [NADPH--hemoprotein reductase] + H2O + H(+)</text>
        <dbReference type="Rhea" id="RHEA:45084"/>
        <dbReference type="Rhea" id="RHEA-COMP:11964"/>
        <dbReference type="Rhea" id="RHEA-COMP:11965"/>
        <dbReference type="ChEBI" id="CHEBI:15377"/>
        <dbReference type="ChEBI" id="CHEBI:15378"/>
        <dbReference type="ChEBI" id="CHEBI:15379"/>
        <dbReference type="ChEBI" id="CHEBI:18262"/>
        <dbReference type="ChEBI" id="CHEBI:57618"/>
        <dbReference type="ChEBI" id="CHEBI:58210"/>
        <dbReference type="ChEBI" id="CHEBI:84921"/>
        <dbReference type="EC" id="1.14.14.130"/>
    </reaction>
</comment>
<comment type="cofactor">
    <cofactor evidence="1">
        <name>heme</name>
        <dbReference type="ChEBI" id="CHEBI:30413"/>
    </cofactor>
</comment>
<comment type="subcellular location">
    <subcellularLocation>
        <location evidence="5">Membrane</location>
        <topology evidence="5">Single-pass membrane protein</topology>
    </subcellularLocation>
</comment>
<comment type="developmental stage">
    <text evidence="3">Specifically expressed in the tapetum cell layer and the microspores of anthers at the tetrad stage. Expression starts to decrease during pollen maturation and tapetum cell degeneration to finally disappear.</text>
</comment>
<comment type="disruption phenotype">
    <text evidence="3">Impaired pollen development and partial male-sterile phenotype.</text>
</comment>
<comment type="similarity">
    <text evidence="5">Belongs to the cytochrome P450 family.</text>
</comment>
<organism>
    <name type="scientific">Arabidopsis thaliana</name>
    <name type="common">Mouse-ear cress</name>
    <dbReference type="NCBI Taxonomy" id="3702"/>
    <lineage>
        <taxon>Eukaryota</taxon>
        <taxon>Viridiplantae</taxon>
        <taxon>Streptophyta</taxon>
        <taxon>Embryophyta</taxon>
        <taxon>Tracheophyta</taxon>
        <taxon>Spermatophyta</taxon>
        <taxon>Magnoliopsida</taxon>
        <taxon>eudicotyledons</taxon>
        <taxon>Gunneridae</taxon>
        <taxon>Pentapetalae</taxon>
        <taxon>rosids</taxon>
        <taxon>malvids</taxon>
        <taxon>Brassicales</taxon>
        <taxon>Brassicaceae</taxon>
        <taxon>Camelineae</taxon>
        <taxon>Arabidopsis</taxon>
    </lineage>
</organism>
<sequence length="510" mass="57854">MILVLASLFAVLILNVLLWRWLKASACKAQRLPPGPPRLPILGNLLQLGPLPHRDLASLCDKYGPLVYLRLGNVDAITTNDPDTIREILLRQDDVFSSRPKTLAAVHLAYGCGDVALAPMGPHWKRMRRICMEHLLTTKRLESFTTQRAEEARYLIRDVFKRSETGKPINLKEVLGAFSMNNVTRMLLGKQFFGPGSLVSPKEAQEFLHITHKLFWLLGVIYLGDYLPFWRWVDPSGCEKEMRDVEKRVDEFHTKIIDEHRRAKLEDEDKNGDMDFVDVLLSLPGENGKAHMEDVEIKALIQDMIAAATDTSAVTNEWAMAEAIKQPRVMRKIQEELDNVVGSNRMVDESDLVHLNYLRCVVRETFRMHPAGPFLIPHESVRATTINGYYIPAKTRVFINTHGLGRNTKIWDDVEDFRPERHWPVEGSGRVEISHGPDFKILPFSAGKRKCPGAPLGVTMVLMALARLFHCFEWSSPGNIDTVEVYGMTMPKAKPLRAIAKPRLAAHLYT</sequence>
<proteinExistence type="evidence at protein level"/>
<evidence type="ECO:0000250" key="1"/>
<evidence type="ECO:0000255" key="2"/>
<evidence type="ECO:0000269" key="3">
    <source>
    </source>
</evidence>
<evidence type="ECO:0000303" key="4">
    <source>
    </source>
</evidence>
<evidence type="ECO:0000305" key="5"/>
<accession>Q9LNJ4</accession>
<name>C70A2_ARATH</name>
<protein>
    <recommendedName>
        <fullName evidence="4">Cytochrome P450 703A2</fullName>
        <ecNumber evidence="3">1.14.14.130</ecNumber>
    </recommendedName>
    <alternativeName>
        <fullName evidence="4">Protein DEFECTIVE IN EXINE FORMATION 2</fullName>
    </alternativeName>
</protein>
<dbReference type="EC" id="1.14.14.130" evidence="3"/>
<dbReference type="EMBL" id="AC023628">
    <property type="protein sequence ID" value="AAF97323.1"/>
    <property type="molecule type" value="Genomic_DNA"/>
</dbReference>
<dbReference type="EMBL" id="CP002684">
    <property type="protein sequence ID" value="AEE27265.1"/>
    <property type="molecule type" value="Genomic_DNA"/>
</dbReference>
<dbReference type="EMBL" id="BT022023">
    <property type="protein sequence ID" value="AAY25435.1"/>
    <property type="molecule type" value="mRNA"/>
</dbReference>
<dbReference type="PIR" id="A86143">
    <property type="entry name" value="A86143"/>
</dbReference>
<dbReference type="RefSeq" id="NP_171635.1">
    <property type="nucleotide sequence ID" value="NM_100010.3"/>
</dbReference>
<dbReference type="SMR" id="Q9LNJ4"/>
<dbReference type="FunCoup" id="Q9LNJ4">
    <property type="interactions" value="392"/>
</dbReference>
<dbReference type="IntAct" id="Q9LNJ4">
    <property type="interactions" value="1"/>
</dbReference>
<dbReference type="STRING" id="3702.Q9LNJ4"/>
<dbReference type="PaxDb" id="3702-AT1G01280.1"/>
<dbReference type="ProteomicsDB" id="240267"/>
<dbReference type="EnsemblPlants" id="AT1G01280.1">
    <property type="protein sequence ID" value="AT1G01280.1"/>
    <property type="gene ID" value="AT1G01280"/>
</dbReference>
<dbReference type="GeneID" id="839470"/>
<dbReference type="Gramene" id="AT1G01280.1">
    <property type="protein sequence ID" value="AT1G01280.1"/>
    <property type="gene ID" value="AT1G01280"/>
</dbReference>
<dbReference type="KEGG" id="ath:AT1G01280"/>
<dbReference type="Araport" id="AT1G01280"/>
<dbReference type="TAIR" id="AT1G01280">
    <property type="gene designation" value="CYP703A2"/>
</dbReference>
<dbReference type="eggNOG" id="KOG0156">
    <property type="taxonomic scope" value="Eukaryota"/>
</dbReference>
<dbReference type="HOGENOM" id="CLU_001570_4_0_1"/>
<dbReference type="InParanoid" id="Q9LNJ4"/>
<dbReference type="OMA" id="GPQEAME"/>
<dbReference type="PhylomeDB" id="Q9LNJ4"/>
<dbReference type="BioCyc" id="ARA:AT1G01280-MONOMER"/>
<dbReference type="BioCyc" id="MetaCyc:AT1G01280-MONOMER"/>
<dbReference type="BRENDA" id="1.14.14.130">
    <property type="organism ID" value="399"/>
</dbReference>
<dbReference type="PRO" id="PR:Q9LNJ4"/>
<dbReference type="Proteomes" id="UP000006548">
    <property type="component" value="Chromosome 1"/>
</dbReference>
<dbReference type="ExpressionAtlas" id="Q9LNJ4">
    <property type="expression patterns" value="baseline and differential"/>
</dbReference>
<dbReference type="GO" id="GO:0016020">
    <property type="term" value="C:membrane"/>
    <property type="evidence" value="ECO:0007669"/>
    <property type="project" value="UniProtKB-SubCell"/>
</dbReference>
<dbReference type="GO" id="GO:0052722">
    <property type="term" value="F:fatty acid in-chain hydroxylase activity"/>
    <property type="evidence" value="ECO:0007669"/>
    <property type="project" value="EnsemblPlants"/>
</dbReference>
<dbReference type="GO" id="GO:0020037">
    <property type="term" value="F:heme binding"/>
    <property type="evidence" value="ECO:0007669"/>
    <property type="project" value="InterPro"/>
</dbReference>
<dbReference type="GO" id="GO:0005506">
    <property type="term" value="F:iron ion binding"/>
    <property type="evidence" value="ECO:0007669"/>
    <property type="project" value="InterPro"/>
</dbReference>
<dbReference type="GO" id="GO:0016709">
    <property type="term" value="F:oxidoreductase activity, acting on paired donors, with incorporation or reduction of molecular oxygen, NAD(P)H as one donor, and incorporation of one atom of oxygen"/>
    <property type="evidence" value="ECO:0000314"/>
    <property type="project" value="TAIR"/>
</dbReference>
<dbReference type="GO" id="GO:0048653">
    <property type="term" value="P:anther development"/>
    <property type="evidence" value="ECO:0007669"/>
    <property type="project" value="EnsemblPlants"/>
</dbReference>
<dbReference type="GO" id="GO:0002933">
    <property type="term" value="P:lipid hydroxylation"/>
    <property type="evidence" value="ECO:0007669"/>
    <property type="project" value="EnsemblPlants"/>
</dbReference>
<dbReference type="GO" id="GO:0051792">
    <property type="term" value="P:medium-chain fatty acid biosynthetic process"/>
    <property type="evidence" value="ECO:0000314"/>
    <property type="project" value="TAIR"/>
</dbReference>
<dbReference type="GO" id="GO:0051791">
    <property type="term" value="P:medium-chain fatty acid metabolic process"/>
    <property type="evidence" value="ECO:0000314"/>
    <property type="project" value="TAIR"/>
</dbReference>
<dbReference type="GO" id="GO:0009555">
    <property type="term" value="P:pollen development"/>
    <property type="evidence" value="ECO:0000315"/>
    <property type="project" value="TAIR"/>
</dbReference>
<dbReference type="GO" id="GO:0010584">
    <property type="term" value="P:pollen exine formation"/>
    <property type="evidence" value="ECO:0000315"/>
    <property type="project" value="TAIR"/>
</dbReference>
<dbReference type="GO" id="GO:0010208">
    <property type="term" value="P:pollen wall assembly"/>
    <property type="evidence" value="ECO:0000315"/>
    <property type="project" value="TAIR"/>
</dbReference>
<dbReference type="GO" id="GO:0080110">
    <property type="term" value="P:sporopollenin biosynthetic process"/>
    <property type="evidence" value="ECO:0000315"/>
    <property type="project" value="TAIR"/>
</dbReference>
<dbReference type="CDD" id="cd20618">
    <property type="entry name" value="CYP71_clan"/>
    <property type="match status" value="1"/>
</dbReference>
<dbReference type="FunFam" id="1.10.630.10:FF:000071">
    <property type="entry name" value="Cytochrome P450 703A2"/>
    <property type="match status" value="1"/>
</dbReference>
<dbReference type="Gene3D" id="1.10.630.10">
    <property type="entry name" value="Cytochrome P450"/>
    <property type="match status" value="1"/>
</dbReference>
<dbReference type="InterPro" id="IPR001128">
    <property type="entry name" value="Cyt_P450"/>
</dbReference>
<dbReference type="InterPro" id="IPR017972">
    <property type="entry name" value="Cyt_P450_CS"/>
</dbReference>
<dbReference type="InterPro" id="IPR002401">
    <property type="entry name" value="Cyt_P450_E_grp-I"/>
</dbReference>
<dbReference type="InterPro" id="IPR036396">
    <property type="entry name" value="Cyt_P450_sf"/>
</dbReference>
<dbReference type="PANTHER" id="PTHR47944">
    <property type="entry name" value="CYTOCHROME P450 98A9"/>
    <property type="match status" value="1"/>
</dbReference>
<dbReference type="PANTHER" id="PTHR47944:SF16">
    <property type="entry name" value="CYTOCHROME P450 FAMILY 1 SUBFAMILY A POLYPEPTIDE 1"/>
    <property type="match status" value="1"/>
</dbReference>
<dbReference type="Pfam" id="PF00067">
    <property type="entry name" value="p450"/>
    <property type="match status" value="1"/>
</dbReference>
<dbReference type="PRINTS" id="PR00463">
    <property type="entry name" value="EP450I"/>
</dbReference>
<dbReference type="PRINTS" id="PR00385">
    <property type="entry name" value="P450"/>
</dbReference>
<dbReference type="SUPFAM" id="SSF48264">
    <property type="entry name" value="Cytochrome P450"/>
    <property type="match status" value="1"/>
</dbReference>
<dbReference type="PROSITE" id="PS00086">
    <property type="entry name" value="CYTOCHROME_P450"/>
    <property type="match status" value="1"/>
</dbReference>
<reference key="1">
    <citation type="journal article" date="2000" name="Nature">
        <title>Sequence and analysis of chromosome 1 of the plant Arabidopsis thaliana.</title>
        <authorList>
            <person name="Theologis A."/>
            <person name="Ecker J.R."/>
            <person name="Palm C.J."/>
            <person name="Federspiel N.A."/>
            <person name="Kaul S."/>
            <person name="White O."/>
            <person name="Alonso J."/>
            <person name="Altafi H."/>
            <person name="Araujo R."/>
            <person name="Bowman C.L."/>
            <person name="Brooks S.Y."/>
            <person name="Buehler E."/>
            <person name="Chan A."/>
            <person name="Chao Q."/>
            <person name="Chen H."/>
            <person name="Cheuk R.F."/>
            <person name="Chin C.W."/>
            <person name="Chung M.K."/>
            <person name="Conn L."/>
            <person name="Conway A.B."/>
            <person name="Conway A.R."/>
            <person name="Creasy T.H."/>
            <person name="Dewar K."/>
            <person name="Dunn P."/>
            <person name="Etgu P."/>
            <person name="Feldblyum T.V."/>
            <person name="Feng J.-D."/>
            <person name="Fong B."/>
            <person name="Fujii C.Y."/>
            <person name="Gill J.E."/>
            <person name="Goldsmith A.D."/>
            <person name="Haas B."/>
            <person name="Hansen N.F."/>
            <person name="Hughes B."/>
            <person name="Huizar L."/>
            <person name="Hunter J.L."/>
            <person name="Jenkins J."/>
            <person name="Johnson-Hopson C."/>
            <person name="Khan S."/>
            <person name="Khaykin E."/>
            <person name="Kim C.J."/>
            <person name="Koo H.L."/>
            <person name="Kremenetskaia I."/>
            <person name="Kurtz D.B."/>
            <person name="Kwan A."/>
            <person name="Lam B."/>
            <person name="Langin-Hooper S."/>
            <person name="Lee A."/>
            <person name="Lee J.M."/>
            <person name="Lenz C.A."/>
            <person name="Li J.H."/>
            <person name="Li Y.-P."/>
            <person name="Lin X."/>
            <person name="Liu S.X."/>
            <person name="Liu Z.A."/>
            <person name="Luros J.S."/>
            <person name="Maiti R."/>
            <person name="Marziali A."/>
            <person name="Militscher J."/>
            <person name="Miranda M."/>
            <person name="Nguyen M."/>
            <person name="Nierman W.C."/>
            <person name="Osborne B.I."/>
            <person name="Pai G."/>
            <person name="Peterson J."/>
            <person name="Pham P.K."/>
            <person name="Rizzo M."/>
            <person name="Rooney T."/>
            <person name="Rowley D."/>
            <person name="Sakano H."/>
            <person name="Salzberg S.L."/>
            <person name="Schwartz J.R."/>
            <person name="Shinn P."/>
            <person name="Southwick A.M."/>
            <person name="Sun H."/>
            <person name="Tallon L.J."/>
            <person name="Tambunga G."/>
            <person name="Toriumi M.J."/>
            <person name="Town C.D."/>
            <person name="Utterback T."/>
            <person name="Van Aken S."/>
            <person name="Vaysberg M."/>
            <person name="Vysotskaia V.S."/>
            <person name="Walker M."/>
            <person name="Wu D."/>
            <person name="Yu G."/>
            <person name="Fraser C.M."/>
            <person name="Venter J.C."/>
            <person name="Davis R.W."/>
        </authorList>
    </citation>
    <scope>NUCLEOTIDE SEQUENCE [LARGE SCALE GENOMIC DNA]</scope>
    <source>
        <strain>cv. Columbia</strain>
    </source>
</reference>
<reference key="2">
    <citation type="journal article" date="2017" name="Plant J.">
        <title>Araport11: a complete reannotation of the Arabidopsis thaliana reference genome.</title>
        <authorList>
            <person name="Cheng C.Y."/>
            <person name="Krishnakumar V."/>
            <person name="Chan A.P."/>
            <person name="Thibaud-Nissen F."/>
            <person name="Schobel S."/>
            <person name="Town C.D."/>
        </authorList>
    </citation>
    <scope>GENOME REANNOTATION</scope>
    <source>
        <strain>cv. Columbia</strain>
    </source>
</reference>
<reference key="3">
    <citation type="submission" date="2005-05" db="EMBL/GenBank/DDBJ databases">
        <title>Arabidopsis ORF clones.</title>
        <authorList>
            <person name="Cheuk R.F."/>
            <person name="Chen H."/>
            <person name="Kim C.J."/>
            <person name="Shinn P."/>
            <person name="Ecker J.R."/>
        </authorList>
    </citation>
    <scope>NUCLEOTIDE SEQUENCE [LARGE SCALE MRNA]</scope>
    <source>
        <strain>cv. Columbia</strain>
    </source>
</reference>
<reference key="4">
    <citation type="journal article" date="2007" name="Plant Cell">
        <title>CYP703 is an ancient cytochrome P450 in land plants catalyzing in-chain hydroxylation of lauric acid to provide building blocks for sporopollenin synthesis in pollen.</title>
        <authorList>
            <person name="Morant M."/>
            <person name="Jorgensen K."/>
            <person name="Schaller H."/>
            <person name="Pinot F."/>
            <person name="Moller B.L."/>
            <person name="Werck-Reichhart D."/>
            <person name="Bak S."/>
        </authorList>
    </citation>
    <scope>FUNCTION</scope>
    <scope>CATALYTIC ACTIVITY</scope>
    <scope>DEVELOPMENTAL STAGE</scope>
    <scope>DISRUPTION PHENOTYPE</scope>
</reference>